<proteinExistence type="inferred from homology"/>
<feature type="initiator methionine" description="Removed" evidence="1">
    <location>
        <position position="1"/>
    </location>
</feature>
<feature type="chain" id="PRO_0000271736" description="Elastin-binding protein EbpS">
    <location>
        <begin position="2"/>
        <end position="486"/>
    </location>
</feature>
<feature type="topological domain" description="Extracellular" evidence="2">
    <location>
        <begin position="2"/>
        <end position="204"/>
    </location>
</feature>
<feature type="transmembrane region" description="Helical" evidence="2">
    <location>
        <begin position="205"/>
        <end position="225"/>
    </location>
</feature>
<feature type="topological domain" description="Cytoplasmic" evidence="2">
    <location>
        <begin position="226"/>
        <end position="319"/>
    </location>
</feature>
<feature type="transmembrane region" description="Helical" evidence="2">
    <location>
        <begin position="320"/>
        <end position="340"/>
    </location>
</feature>
<feature type="topological domain" description="Extracellular" evidence="2">
    <location>
        <begin position="341"/>
        <end position="486"/>
    </location>
</feature>
<feature type="domain" description="LysM" evidence="3">
    <location>
        <begin position="437"/>
        <end position="485"/>
    </location>
</feature>
<feature type="region of interest" description="Disordered" evidence="4">
    <location>
        <begin position="1"/>
        <end position="314"/>
    </location>
</feature>
<feature type="region of interest" description="Elastin-binding" evidence="1">
    <location>
        <begin position="14"/>
        <end position="34"/>
    </location>
</feature>
<feature type="region of interest" description="Disordered" evidence="4">
    <location>
        <begin position="351"/>
        <end position="440"/>
    </location>
</feature>
<feature type="compositionally biased region" description="Basic and acidic residues" evidence="4">
    <location>
        <begin position="1"/>
        <end position="40"/>
    </location>
</feature>
<feature type="compositionally biased region" description="Polar residues" evidence="4">
    <location>
        <begin position="64"/>
        <end position="85"/>
    </location>
</feature>
<feature type="compositionally biased region" description="Basic and acidic residues" evidence="4">
    <location>
        <begin position="103"/>
        <end position="118"/>
    </location>
</feature>
<feature type="compositionally biased region" description="Basic and acidic residues" evidence="4">
    <location>
        <begin position="126"/>
        <end position="149"/>
    </location>
</feature>
<feature type="compositionally biased region" description="Polar residues" evidence="4">
    <location>
        <begin position="150"/>
        <end position="166"/>
    </location>
</feature>
<feature type="compositionally biased region" description="Basic and acidic residues" evidence="4">
    <location>
        <begin position="180"/>
        <end position="199"/>
    </location>
</feature>
<feature type="compositionally biased region" description="Low complexity" evidence="4">
    <location>
        <begin position="204"/>
        <end position="225"/>
    </location>
</feature>
<feature type="compositionally biased region" description="Low complexity" evidence="4">
    <location>
        <begin position="233"/>
        <end position="246"/>
    </location>
</feature>
<feature type="compositionally biased region" description="Basic and acidic residues" evidence="4">
    <location>
        <begin position="247"/>
        <end position="259"/>
    </location>
</feature>
<feature type="compositionally biased region" description="Low complexity" evidence="4">
    <location>
        <begin position="278"/>
        <end position="297"/>
    </location>
</feature>
<feature type="compositionally biased region" description="Basic and acidic residues" evidence="4">
    <location>
        <begin position="299"/>
        <end position="314"/>
    </location>
</feature>
<feature type="compositionally biased region" description="Basic and acidic residues" evidence="4">
    <location>
        <begin position="361"/>
        <end position="398"/>
    </location>
</feature>
<feature type="compositionally biased region" description="Low complexity" evidence="4">
    <location>
        <begin position="403"/>
        <end position="431"/>
    </location>
</feature>
<keyword id="KW-1003">Cell membrane</keyword>
<keyword id="KW-0472">Membrane</keyword>
<keyword id="KW-0812">Transmembrane</keyword>
<keyword id="KW-1133">Transmembrane helix</keyword>
<accession>Q99U09</accession>
<reference key="1">
    <citation type="journal article" date="2001" name="Lancet">
        <title>Whole genome sequencing of meticillin-resistant Staphylococcus aureus.</title>
        <authorList>
            <person name="Kuroda M."/>
            <person name="Ohta T."/>
            <person name="Uchiyama I."/>
            <person name="Baba T."/>
            <person name="Yuzawa H."/>
            <person name="Kobayashi I."/>
            <person name="Cui L."/>
            <person name="Oguchi A."/>
            <person name="Aoki K."/>
            <person name="Nagai Y."/>
            <person name="Lian J.-Q."/>
            <person name="Ito T."/>
            <person name="Kanamori M."/>
            <person name="Matsumaru H."/>
            <person name="Maruyama A."/>
            <person name="Murakami H."/>
            <person name="Hosoyama A."/>
            <person name="Mizutani-Ui Y."/>
            <person name="Takahashi N.K."/>
            <person name="Sawano T."/>
            <person name="Inoue R."/>
            <person name="Kaito C."/>
            <person name="Sekimizu K."/>
            <person name="Hirakawa H."/>
            <person name="Kuhara S."/>
            <person name="Goto S."/>
            <person name="Yabuzaki J."/>
            <person name="Kanehisa M."/>
            <person name="Yamashita A."/>
            <person name="Oshima K."/>
            <person name="Furuya K."/>
            <person name="Yoshino C."/>
            <person name="Shiba T."/>
            <person name="Hattori M."/>
            <person name="Ogasawara N."/>
            <person name="Hayashi H."/>
            <person name="Hiramatsu K."/>
        </authorList>
    </citation>
    <scope>NUCLEOTIDE SEQUENCE [LARGE SCALE GENOMIC DNA]</scope>
    <source>
        <strain>Mu50 / ATCC 700699</strain>
    </source>
</reference>
<dbReference type="EMBL" id="BA000017">
    <property type="protein sequence ID" value="BAB57643.1"/>
    <property type="molecule type" value="Genomic_DNA"/>
</dbReference>
<dbReference type="RefSeq" id="WP_000069289.1">
    <property type="nucleotide sequence ID" value="NC_002758.2"/>
</dbReference>
<dbReference type="SMR" id="Q99U09"/>
<dbReference type="KEGG" id="sav:SAV1481"/>
<dbReference type="HOGENOM" id="CLU_043950_0_0_9"/>
<dbReference type="Proteomes" id="UP000002481">
    <property type="component" value="Chromosome"/>
</dbReference>
<dbReference type="GO" id="GO:0005886">
    <property type="term" value="C:plasma membrane"/>
    <property type="evidence" value="ECO:0007669"/>
    <property type="project" value="UniProtKB-SubCell"/>
</dbReference>
<dbReference type="CDD" id="cd00118">
    <property type="entry name" value="LysM"/>
    <property type="match status" value="1"/>
</dbReference>
<dbReference type="Gene3D" id="3.10.350.10">
    <property type="entry name" value="LysM domain"/>
    <property type="match status" value="1"/>
</dbReference>
<dbReference type="InterPro" id="IPR018392">
    <property type="entry name" value="LysM_dom"/>
</dbReference>
<dbReference type="InterPro" id="IPR036779">
    <property type="entry name" value="LysM_dom_sf"/>
</dbReference>
<dbReference type="NCBIfam" id="NF033598">
    <property type="entry name" value="elast_bind_EbpS"/>
    <property type="match status" value="1"/>
</dbReference>
<dbReference type="Pfam" id="PF01476">
    <property type="entry name" value="LysM"/>
    <property type="match status" value="1"/>
</dbReference>
<dbReference type="SMART" id="SM00257">
    <property type="entry name" value="LysM"/>
    <property type="match status" value="1"/>
</dbReference>
<dbReference type="SUPFAM" id="SSF54106">
    <property type="entry name" value="LysM domain"/>
    <property type="match status" value="1"/>
</dbReference>
<dbReference type="PROSITE" id="PS51782">
    <property type="entry name" value="LYSM"/>
    <property type="match status" value="1"/>
</dbReference>
<sequence length="486" mass="53181">MSNNFKDDFEKNRQSIDTNSHQDHTEDVEKDQSELEHQDTIENTEQQFPPRNAQRRKRRRDLATNHNKQVHNESQTSEDNVQNEAGTIDDRQVESSHSTESQEPSHQDSTPQHEEEYYNKNAFAMDKSHPEPIEDNDKHETIKDAENNTEHSTVSDKSIAEQSQQPKPYFATGANQANTSKDKHDDVTVKQDKDESKDHHSGKKGAAIGAGTAGVAGAAGAMGVSKAKKHSNDAQNKSNSDKSNNSTEDKASQDKSKDHHNGKKGAAIGAGTAGLAGGAASKSASAASKPHASNNASQNHDEHDNHDRDKERKKGGMAKVLLPLIAAVLIIGALAIFGGMALNNHNNGTKENKIANTNKNNADESKDKDTSKDASKDKSKSTDSDKSKEDQDKATKDESDNDQNNANQANNQAQNNQNQQQANQNQQQQQQRQGGGQRHTVNGQENLYRIAIQYYGSGSPENVEKIRRANGLSGNNIRNGQQIVIP</sequence>
<name>EBPS_STAAM</name>
<gene>
    <name type="primary">ebpS</name>
    <name type="ordered locus">SAV1481</name>
</gene>
<protein>
    <recommendedName>
        <fullName>Elastin-binding protein EbpS</fullName>
    </recommendedName>
</protein>
<organism>
    <name type="scientific">Staphylococcus aureus (strain Mu50 / ATCC 700699)</name>
    <dbReference type="NCBI Taxonomy" id="158878"/>
    <lineage>
        <taxon>Bacteria</taxon>
        <taxon>Bacillati</taxon>
        <taxon>Bacillota</taxon>
        <taxon>Bacilli</taxon>
        <taxon>Bacillales</taxon>
        <taxon>Staphylococcaceae</taxon>
        <taxon>Staphylococcus</taxon>
    </lineage>
</organism>
<evidence type="ECO:0000250" key="1"/>
<evidence type="ECO:0000255" key="2"/>
<evidence type="ECO:0000255" key="3">
    <source>
        <dbReference type="PROSITE-ProRule" id="PRU01118"/>
    </source>
</evidence>
<evidence type="ECO:0000256" key="4">
    <source>
        <dbReference type="SAM" id="MobiDB-lite"/>
    </source>
</evidence>
<comment type="function">
    <text evidence="1">Promotes binding of soluble elastin peptides and tropoelastin to S.aureus cells although it is not able to promote bacterial adherence to immobilized elastin and, therefore, is not a microbial surface component recognizing adhesive matrix molecule (MSCRAMM).</text>
</comment>
<comment type="subcellular location">
    <subcellularLocation>
        <location evidence="1">Cell membrane</location>
        <topology evidence="1">Multi-pass membrane protein</topology>
    </subcellularLocation>
</comment>
<comment type="domain">
    <text evidence="1">The elastin-binding domain is located between residues 13-33 at the surface-exposed N-terminus, whereas the C-terminus, containing the LysM peptidoglycan-binding domain, is not exposed on the surface of intact cells and presumably remains buried within the peptidoglycan. The presence of the TNSHQD sequence, corresponding to residues 18-23, is essential for EbpS activity but not sufficient, additional flanking amino acids in the amino- or carboxy-terminal are required for elastin recognition (By similarity).</text>
</comment>